<protein>
    <recommendedName>
        <fullName evidence="1">Photosystem I assembly protein Ycf3</fullName>
    </recommendedName>
</protein>
<keyword id="KW-0150">Chloroplast</keyword>
<keyword id="KW-0472">Membrane</keyword>
<keyword id="KW-0602">Photosynthesis</keyword>
<keyword id="KW-0934">Plastid</keyword>
<keyword id="KW-0677">Repeat</keyword>
<keyword id="KW-0793">Thylakoid</keyword>
<keyword id="KW-0802">TPR repeat</keyword>
<organism>
    <name type="scientific">Cycas taitungensis</name>
    <name type="common">Prince sago</name>
    <name type="synonym">Cycas taiwaniana</name>
    <dbReference type="NCBI Taxonomy" id="54799"/>
    <lineage>
        <taxon>Eukaryota</taxon>
        <taxon>Viridiplantae</taxon>
        <taxon>Streptophyta</taxon>
        <taxon>Embryophyta</taxon>
        <taxon>Tracheophyta</taxon>
        <taxon>Spermatophyta</taxon>
        <taxon>Cycadidae</taxon>
        <taxon>Cycadales</taxon>
        <taxon>Cycadaceae</taxon>
        <taxon>Cycas</taxon>
    </lineage>
</organism>
<sequence>MPRSQRNDNFTDKTFTIVADILLRIIPTAPGEKEAFTYYRDGVMSAQSEGEYAEALQNYYEAMRPEIDPYDRSYILYNIGLIHMSNGEHTEALEYYFQALKRNPSLPQAFNNMAVICHYRGEQAIRQGDPETAEAWSDRAAEYWKQAIALAPGNYIEAQNWLKITGRLGE</sequence>
<accession>A6H5H4</accession>
<gene>
    <name evidence="1" type="primary">ycf3</name>
</gene>
<dbReference type="EMBL" id="AP009339">
    <property type="protein sequence ID" value="BAF64940.1"/>
    <property type="molecule type" value="Genomic_DNA"/>
</dbReference>
<dbReference type="RefSeq" id="YP_001312199.2">
    <property type="nucleotide sequence ID" value="NC_009618.1"/>
</dbReference>
<dbReference type="SMR" id="A6H5H4"/>
<dbReference type="GeneID" id="5309626"/>
<dbReference type="GO" id="GO:0009535">
    <property type="term" value="C:chloroplast thylakoid membrane"/>
    <property type="evidence" value="ECO:0007669"/>
    <property type="project" value="UniProtKB-SubCell"/>
</dbReference>
<dbReference type="GO" id="GO:0015979">
    <property type="term" value="P:photosynthesis"/>
    <property type="evidence" value="ECO:0007669"/>
    <property type="project" value="UniProtKB-UniRule"/>
</dbReference>
<dbReference type="FunFam" id="1.25.40.10:FF:000004">
    <property type="entry name" value="Photosystem I assembly protein Ycf3"/>
    <property type="match status" value="1"/>
</dbReference>
<dbReference type="Gene3D" id="1.25.40.10">
    <property type="entry name" value="Tetratricopeptide repeat domain"/>
    <property type="match status" value="1"/>
</dbReference>
<dbReference type="HAMAP" id="MF_00439">
    <property type="entry name" value="Ycf3"/>
    <property type="match status" value="1"/>
</dbReference>
<dbReference type="InterPro" id="IPR022818">
    <property type="entry name" value="PSI_Ycf3_assembly"/>
</dbReference>
<dbReference type="InterPro" id="IPR011990">
    <property type="entry name" value="TPR-like_helical_dom_sf"/>
</dbReference>
<dbReference type="InterPro" id="IPR019734">
    <property type="entry name" value="TPR_rpt"/>
</dbReference>
<dbReference type="InterPro" id="IPR051685">
    <property type="entry name" value="Ycf3/AcsC/BcsC/TPR_MFPF"/>
</dbReference>
<dbReference type="NCBIfam" id="NF002725">
    <property type="entry name" value="PRK02603.1"/>
    <property type="match status" value="1"/>
</dbReference>
<dbReference type="PANTHER" id="PTHR44943">
    <property type="entry name" value="CELLULOSE SYNTHASE OPERON PROTEIN C"/>
    <property type="match status" value="1"/>
</dbReference>
<dbReference type="PANTHER" id="PTHR44943:SF8">
    <property type="entry name" value="TPR REPEAT-CONTAINING PROTEIN MJ0263"/>
    <property type="match status" value="1"/>
</dbReference>
<dbReference type="Pfam" id="PF00515">
    <property type="entry name" value="TPR_1"/>
    <property type="match status" value="1"/>
</dbReference>
<dbReference type="SMART" id="SM00028">
    <property type="entry name" value="TPR"/>
    <property type="match status" value="2"/>
</dbReference>
<dbReference type="SUPFAM" id="SSF48452">
    <property type="entry name" value="TPR-like"/>
    <property type="match status" value="1"/>
</dbReference>
<dbReference type="PROSITE" id="PS50005">
    <property type="entry name" value="TPR"/>
    <property type="match status" value="2"/>
</dbReference>
<dbReference type="PROSITE" id="PS50293">
    <property type="entry name" value="TPR_REGION"/>
    <property type="match status" value="1"/>
</dbReference>
<evidence type="ECO:0000255" key="1">
    <source>
        <dbReference type="HAMAP-Rule" id="MF_00439"/>
    </source>
</evidence>
<comment type="function">
    <text evidence="1">Essential for the assembly of the photosystem I (PSI) complex. May act as a chaperone-like factor to guide the assembly of the PSI subunits.</text>
</comment>
<comment type="subcellular location">
    <subcellularLocation>
        <location evidence="1">Plastid</location>
        <location evidence="1">Chloroplast thylakoid membrane</location>
        <topology evidence="1">Peripheral membrane protein</topology>
    </subcellularLocation>
</comment>
<comment type="similarity">
    <text evidence="1">Belongs to the Ycf3 family.</text>
</comment>
<reference key="1">
    <citation type="journal article" date="2007" name="Mol. Biol. Evol.">
        <title>Chloroplast genome (cpDNA) of Cycas taitungensis and 56 cp protein-coding genes of Gnetum parvifolium: insights into cpDNA evolution and phylogeny of extant seed plants.</title>
        <authorList>
            <person name="Wu C.-S."/>
            <person name="Wang Y.-N."/>
            <person name="Liu S.-M."/>
            <person name="Chaw S.-M."/>
        </authorList>
    </citation>
    <scope>NUCLEOTIDE SEQUENCE [LARGE SCALE GENOMIC DNA]</scope>
</reference>
<feature type="chain" id="PRO_0000325060" description="Photosystem I assembly protein Ycf3">
    <location>
        <begin position="1"/>
        <end position="170"/>
    </location>
</feature>
<feature type="repeat" description="TPR 1">
    <location>
        <begin position="35"/>
        <end position="69"/>
    </location>
</feature>
<feature type="repeat" description="TPR 2">
    <location>
        <begin position="73"/>
        <end position="106"/>
    </location>
</feature>
<feature type="repeat" description="TPR 3">
    <location>
        <begin position="121"/>
        <end position="154"/>
    </location>
</feature>
<geneLocation type="chloroplast"/>
<name>YCF3_CYCTA</name>
<proteinExistence type="inferred from homology"/>